<feature type="chain" id="PRO_0000399666" description="Respiratory supercomplex factor 1, mitochondrial">
    <location>
        <begin position="1"/>
        <end position="140"/>
    </location>
</feature>
<feature type="transmembrane region" description="Helical" evidence="2">
    <location>
        <begin position="35"/>
        <end position="54"/>
    </location>
</feature>
<feature type="transmembrane region" description="Helical" evidence="2">
    <location>
        <begin position="66"/>
        <end position="88"/>
    </location>
</feature>
<feature type="domain" description="HIG1" evidence="2">
    <location>
        <begin position="7"/>
        <end position="98"/>
    </location>
</feature>
<dbReference type="EMBL" id="CR382129">
    <property type="protein sequence ID" value="CAG82224.2"/>
    <property type="molecule type" value="Genomic_DNA"/>
</dbReference>
<dbReference type="RefSeq" id="XP_501904.2">
    <property type="nucleotide sequence ID" value="XM_501904.2"/>
</dbReference>
<dbReference type="SMR" id="Q6CBQ8"/>
<dbReference type="FunCoup" id="Q6CBQ8">
    <property type="interactions" value="80"/>
</dbReference>
<dbReference type="STRING" id="284591.Q6CBQ8"/>
<dbReference type="EnsemblFungi" id="CAG82224">
    <property type="protein sequence ID" value="CAG82224"/>
    <property type="gene ID" value="YALI0_C16456g"/>
</dbReference>
<dbReference type="KEGG" id="yli:2909748"/>
<dbReference type="VEuPathDB" id="FungiDB:YALI0_C16456g"/>
<dbReference type="HOGENOM" id="CLU_087356_1_0_1"/>
<dbReference type="InParanoid" id="Q6CBQ8"/>
<dbReference type="OMA" id="QRWIREL"/>
<dbReference type="OrthoDB" id="107897at4891"/>
<dbReference type="Proteomes" id="UP000001300">
    <property type="component" value="Chromosome C"/>
</dbReference>
<dbReference type="GO" id="GO:0005743">
    <property type="term" value="C:mitochondrial inner membrane"/>
    <property type="evidence" value="ECO:0007669"/>
    <property type="project" value="EnsemblFungi"/>
</dbReference>
<dbReference type="GO" id="GO:0005739">
    <property type="term" value="C:mitochondrion"/>
    <property type="evidence" value="ECO:0000318"/>
    <property type="project" value="GO_Central"/>
</dbReference>
<dbReference type="GO" id="GO:0098803">
    <property type="term" value="C:respiratory chain complex"/>
    <property type="evidence" value="ECO:0007669"/>
    <property type="project" value="EnsemblFungi"/>
</dbReference>
<dbReference type="GO" id="GO:0033617">
    <property type="term" value="P:mitochondrial cytochrome c oxidase assembly"/>
    <property type="evidence" value="ECO:0007669"/>
    <property type="project" value="EnsemblFungi"/>
</dbReference>
<dbReference type="GO" id="GO:0097250">
    <property type="term" value="P:mitochondrial respirasome assembly"/>
    <property type="evidence" value="ECO:0000318"/>
    <property type="project" value="GO_Central"/>
</dbReference>
<dbReference type="GO" id="GO:0010155">
    <property type="term" value="P:regulation of proton transport"/>
    <property type="evidence" value="ECO:0007669"/>
    <property type="project" value="EnsemblFungi"/>
</dbReference>
<dbReference type="Gene3D" id="6.10.140.1320">
    <property type="match status" value="1"/>
</dbReference>
<dbReference type="InterPro" id="IPR007667">
    <property type="entry name" value="Hypoxia_induced_domain"/>
</dbReference>
<dbReference type="InterPro" id="IPR050355">
    <property type="entry name" value="RCF1"/>
</dbReference>
<dbReference type="PANTHER" id="PTHR12297:SF3">
    <property type="entry name" value="HIG1 DOMAIN FAMILY MEMBER 1A"/>
    <property type="match status" value="1"/>
</dbReference>
<dbReference type="PANTHER" id="PTHR12297">
    <property type="entry name" value="HYPOXIA-INDUCBILE GENE 1 HIG1 -RELATED"/>
    <property type="match status" value="1"/>
</dbReference>
<dbReference type="Pfam" id="PF04588">
    <property type="entry name" value="HIG_1_N"/>
    <property type="match status" value="1"/>
</dbReference>
<dbReference type="PROSITE" id="PS51503">
    <property type="entry name" value="HIG1"/>
    <property type="match status" value="1"/>
</dbReference>
<accession>Q6CBQ8</accession>
<sequence length="140" mass="16160">MSDLPSSFDNGNSIDENEKSPGYYKILERCKEQPLVPLGCLATCGALILSARALRVGNKRQANRMFFARVAFQGLTVAALIGGAMYYGQDPKQKLEQKEREKMLARHREKLWIEELERRDLEVQERRKRAAAFRQQEEEK</sequence>
<organism>
    <name type="scientific">Yarrowia lipolytica (strain CLIB 122 / E 150)</name>
    <name type="common">Yeast</name>
    <name type="synonym">Candida lipolytica</name>
    <dbReference type="NCBI Taxonomy" id="284591"/>
    <lineage>
        <taxon>Eukaryota</taxon>
        <taxon>Fungi</taxon>
        <taxon>Dikarya</taxon>
        <taxon>Ascomycota</taxon>
        <taxon>Saccharomycotina</taxon>
        <taxon>Dipodascomycetes</taxon>
        <taxon>Dipodascales</taxon>
        <taxon>Dipodascales incertae sedis</taxon>
        <taxon>Yarrowia</taxon>
    </lineage>
</organism>
<proteinExistence type="inferred from homology"/>
<protein>
    <recommendedName>
        <fullName>Respiratory supercomplex factor 1, mitochondrial</fullName>
    </recommendedName>
</protein>
<keyword id="KW-0472">Membrane</keyword>
<keyword id="KW-0496">Mitochondrion</keyword>
<keyword id="KW-1185">Reference proteome</keyword>
<keyword id="KW-0812">Transmembrane</keyword>
<keyword id="KW-1133">Transmembrane helix</keyword>
<evidence type="ECO:0000250" key="1"/>
<evidence type="ECO:0000255" key="2">
    <source>
        <dbReference type="PROSITE-ProRule" id="PRU00836"/>
    </source>
</evidence>
<evidence type="ECO:0000305" key="3"/>
<reference key="1">
    <citation type="journal article" date="2004" name="Nature">
        <title>Genome evolution in yeasts.</title>
        <authorList>
            <person name="Dujon B."/>
            <person name="Sherman D."/>
            <person name="Fischer G."/>
            <person name="Durrens P."/>
            <person name="Casaregola S."/>
            <person name="Lafontaine I."/>
            <person name="de Montigny J."/>
            <person name="Marck C."/>
            <person name="Neuveglise C."/>
            <person name="Talla E."/>
            <person name="Goffard N."/>
            <person name="Frangeul L."/>
            <person name="Aigle M."/>
            <person name="Anthouard V."/>
            <person name="Babour A."/>
            <person name="Barbe V."/>
            <person name="Barnay S."/>
            <person name="Blanchin S."/>
            <person name="Beckerich J.-M."/>
            <person name="Beyne E."/>
            <person name="Bleykasten C."/>
            <person name="Boisrame A."/>
            <person name="Boyer J."/>
            <person name="Cattolico L."/>
            <person name="Confanioleri F."/>
            <person name="de Daruvar A."/>
            <person name="Despons L."/>
            <person name="Fabre E."/>
            <person name="Fairhead C."/>
            <person name="Ferry-Dumazet H."/>
            <person name="Groppi A."/>
            <person name="Hantraye F."/>
            <person name="Hennequin C."/>
            <person name="Jauniaux N."/>
            <person name="Joyet P."/>
            <person name="Kachouri R."/>
            <person name="Kerrest A."/>
            <person name="Koszul R."/>
            <person name="Lemaire M."/>
            <person name="Lesur I."/>
            <person name="Ma L."/>
            <person name="Muller H."/>
            <person name="Nicaud J.-M."/>
            <person name="Nikolski M."/>
            <person name="Oztas S."/>
            <person name="Ozier-Kalogeropoulos O."/>
            <person name="Pellenz S."/>
            <person name="Potier S."/>
            <person name="Richard G.-F."/>
            <person name="Straub M.-L."/>
            <person name="Suleau A."/>
            <person name="Swennen D."/>
            <person name="Tekaia F."/>
            <person name="Wesolowski-Louvel M."/>
            <person name="Westhof E."/>
            <person name="Wirth B."/>
            <person name="Zeniou-Meyer M."/>
            <person name="Zivanovic Y."/>
            <person name="Bolotin-Fukuhara M."/>
            <person name="Thierry A."/>
            <person name="Bouchier C."/>
            <person name="Caudron B."/>
            <person name="Scarpelli C."/>
            <person name="Gaillardin C."/>
            <person name="Weissenbach J."/>
            <person name="Wincker P."/>
            <person name="Souciet J.-L."/>
        </authorList>
    </citation>
    <scope>NUCLEOTIDE SEQUENCE [LARGE SCALE GENOMIC DNA]</scope>
    <source>
        <strain>CLIB 122 / E 150</strain>
    </source>
</reference>
<gene>
    <name type="primary">RCF1</name>
    <name type="synonym">AIM31</name>
    <name type="ordered locus">YALI0C16456g</name>
</gene>
<name>RCF1_YARLI</name>
<comment type="function">
    <text evidence="1">Cytochrome c oxidase subunit which plays a role in assembly of respiratory supercomplexes.</text>
</comment>
<comment type="subunit">
    <text evidence="1">Associates with the respiratory chain complex III/complex IV supercomplex.</text>
</comment>
<comment type="subcellular location">
    <subcellularLocation>
        <location evidence="2">Mitochondrion membrane</location>
        <topology evidence="2">Multi-pass membrane protein</topology>
    </subcellularLocation>
</comment>
<comment type="similarity">
    <text evidence="3">Belongs to the RCF1 family.</text>
</comment>